<dbReference type="EMBL" id="X52532">
    <property type="protein sequence ID" value="CAA36763.1"/>
    <property type="molecule type" value="Genomic_DNA"/>
</dbReference>
<dbReference type="PIR" id="S10210">
    <property type="entry name" value="S10210"/>
</dbReference>
<organismHost>
    <name type="scientific">Homo sapiens</name>
    <name type="common">Human</name>
    <dbReference type="NCBI Taxonomy" id="9606"/>
</organismHost>
<proteinExistence type="predicted"/>
<reference key="1">
    <citation type="journal article" date="1990" name="Nucleic Acids Res.">
        <title>Nucleotide sequence of the region coding for 100K and 33K proteins of human enteric adenovirus type 41 (Tak).</title>
        <authorList>
            <person name="Slemenda S.B."/>
            <person name="Pieniazek N.J."/>
            <person name="Velarde J. Jr."/>
            <person name="Pieniazek D."/>
            <person name="Luftig R.B."/>
        </authorList>
    </citation>
    <scope>NUCLEOTIDE SEQUENCE [GENOMIC DNA]</scope>
    <source>
        <strain>Tak</strain>
    </source>
</reference>
<organism>
    <name type="scientific">Human adenovirus F serotype 41</name>
    <name type="common">HAdV-41</name>
    <name type="synonym">Human adenovirus 41</name>
    <dbReference type="NCBI Taxonomy" id="10524"/>
    <lineage>
        <taxon>Viruses</taxon>
        <taxon>Varidnaviria</taxon>
        <taxon>Bamfordvirae</taxon>
        <taxon>Preplasmiviricota</taxon>
        <taxon>Tectiliviricetes</taxon>
        <taxon>Rowavirales</taxon>
        <taxon>Adenoviridae</taxon>
        <taxon>Mastadenovirus</taxon>
        <taxon>Human mastadenovirus F</taxon>
    </lineage>
</organism>
<feature type="chain" id="PRO_0000221934" description="Uncharacterized 6.9 kDa protein in 100 kDa protein region">
    <location>
        <begin position="1"/>
        <end position="60"/>
    </location>
</feature>
<sequence>MSRSGKIRSASWQAAVRSLKAVQSSRRFRTSSFSSSRRLRSSRHCCQTPIAVCQVRIRKR</sequence>
<accession>P23690</accession>
<name>YL13_ADE41</name>
<protein>
    <recommendedName>
        <fullName>Uncharacterized 6.9 kDa protein in 100 kDa protein region</fullName>
    </recommendedName>
</protein>